<dbReference type="EC" id="3.5.2.7" evidence="1"/>
<dbReference type="EMBL" id="AE009949">
    <property type="protein sequence ID" value="AAL98589.1"/>
    <property type="status" value="ALT_INIT"/>
    <property type="molecule type" value="Genomic_DNA"/>
</dbReference>
<dbReference type="RefSeq" id="WP_011889206.1">
    <property type="nucleotide sequence ID" value="NC_003485.1"/>
</dbReference>
<dbReference type="SMR" id="Q8NZ53"/>
<dbReference type="KEGG" id="spm:spyM18_2139"/>
<dbReference type="HOGENOM" id="CLU_041647_0_1_9"/>
<dbReference type="UniPathway" id="UPA00379">
    <property type="reaction ID" value="UER00551"/>
</dbReference>
<dbReference type="GO" id="GO:0005737">
    <property type="term" value="C:cytoplasm"/>
    <property type="evidence" value="ECO:0007669"/>
    <property type="project" value="UniProtKB-SubCell"/>
</dbReference>
<dbReference type="GO" id="GO:0050480">
    <property type="term" value="F:imidazolonepropionase activity"/>
    <property type="evidence" value="ECO:0007669"/>
    <property type="project" value="UniProtKB-UniRule"/>
</dbReference>
<dbReference type="GO" id="GO:0005506">
    <property type="term" value="F:iron ion binding"/>
    <property type="evidence" value="ECO:0007669"/>
    <property type="project" value="UniProtKB-UniRule"/>
</dbReference>
<dbReference type="GO" id="GO:0008270">
    <property type="term" value="F:zinc ion binding"/>
    <property type="evidence" value="ECO:0007669"/>
    <property type="project" value="UniProtKB-UniRule"/>
</dbReference>
<dbReference type="GO" id="GO:0019556">
    <property type="term" value="P:L-histidine catabolic process to glutamate and formamide"/>
    <property type="evidence" value="ECO:0007669"/>
    <property type="project" value="UniProtKB-UniPathway"/>
</dbReference>
<dbReference type="GO" id="GO:0019557">
    <property type="term" value="P:L-histidine catabolic process to glutamate and formate"/>
    <property type="evidence" value="ECO:0007669"/>
    <property type="project" value="UniProtKB-UniPathway"/>
</dbReference>
<dbReference type="CDD" id="cd01296">
    <property type="entry name" value="Imidazolone-5PH"/>
    <property type="match status" value="1"/>
</dbReference>
<dbReference type="FunFam" id="3.20.20.140:FF:000007">
    <property type="entry name" value="Imidazolonepropionase"/>
    <property type="match status" value="1"/>
</dbReference>
<dbReference type="Gene3D" id="3.20.20.140">
    <property type="entry name" value="Metal-dependent hydrolases"/>
    <property type="match status" value="1"/>
</dbReference>
<dbReference type="Gene3D" id="2.30.40.10">
    <property type="entry name" value="Urease, subunit C, domain 1"/>
    <property type="match status" value="1"/>
</dbReference>
<dbReference type="HAMAP" id="MF_00372">
    <property type="entry name" value="HutI"/>
    <property type="match status" value="1"/>
</dbReference>
<dbReference type="InterPro" id="IPR006680">
    <property type="entry name" value="Amidohydro-rel"/>
</dbReference>
<dbReference type="InterPro" id="IPR005920">
    <property type="entry name" value="HutI"/>
</dbReference>
<dbReference type="InterPro" id="IPR011059">
    <property type="entry name" value="Metal-dep_hydrolase_composite"/>
</dbReference>
<dbReference type="InterPro" id="IPR032466">
    <property type="entry name" value="Metal_Hydrolase"/>
</dbReference>
<dbReference type="NCBIfam" id="TIGR01224">
    <property type="entry name" value="hutI"/>
    <property type="match status" value="1"/>
</dbReference>
<dbReference type="PANTHER" id="PTHR42752">
    <property type="entry name" value="IMIDAZOLONEPROPIONASE"/>
    <property type="match status" value="1"/>
</dbReference>
<dbReference type="PANTHER" id="PTHR42752:SF1">
    <property type="entry name" value="IMIDAZOLONEPROPIONASE-RELATED"/>
    <property type="match status" value="1"/>
</dbReference>
<dbReference type="Pfam" id="PF01979">
    <property type="entry name" value="Amidohydro_1"/>
    <property type="match status" value="1"/>
</dbReference>
<dbReference type="SUPFAM" id="SSF51338">
    <property type="entry name" value="Composite domain of metallo-dependent hydrolases"/>
    <property type="match status" value="1"/>
</dbReference>
<dbReference type="SUPFAM" id="SSF51556">
    <property type="entry name" value="Metallo-dependent hydrolases"/>
    <property type="match status" value="1"/>
</dbReference>
<proteinExistence type="inferred from homology"/>
<gene>
    <name evidence="1" type="primary">hutI</name>
    <name type="ordered locus">spyM18_2139</name>
</gene>
<sequence length="421" mass="45975">MVADVLLTHFNQLFCLNDPGHPLTGQEMKKATIVEDGYIAIKDGLIVALGSGEPDAELVGPQTIMRSYKGKIATPGIIDCHTHLVYGGSREHEFAKKLAGVSYLDILAQGGGILSTVRATRSASFDNLYQKSKRLLDYMLLHGVTTVEAKSGYGLDWETEKRQLDVVAALEKDHPIDLVSTFMAAHAIPEEYKGNPKAYLDVIIKDMLPVVKEKNLAEFCDIFCEKNVFTADESRYLLSKAKEMGFKLRIHADEIASIGGVDVAAELSAVSAEHLMMITNDGIAKLIGAGVIGNLLPATTFSLMEDTYAPARKMIDAGMAITLSTDSNPGSCPTANMQFVMQLGCFMLRLTPIEVLNAVTINAAYSVNRQERVGSLTVGKEADIAIFDAPNIDYPFYFFATNLIHQVYKKGQLTVDRGRIL</sequence>
<organism>
    <name type="scientific">Streptococcus pyogenes serotype M18 (strain MGAS8232)</name>
    <dbReference type="NCBI Taxonomy" id="186103"/>
    <lineage>
        <taxon>Bacteria</taxon>
        <taxon>Bacillati</taxon>
        <taxon>Bacillota</taxon>
        <taxon>Bacilli</taxon>
        <taxon>Lactobacillales</taxon>
        <taxon>Streptococcaceae</taxon>
        <taxon>Streptococcus</taxon>
    </lineage>
</organism>
<accession>Q8NZ53</accession>
<keyword id="KW-0963">Cytoplasm</keyword>
<keyword id="KW-0369">Histidine metabolism</keyword>
<keyword id="KW-0378">Hydrolase</keyword>
<keyword id="KW-0408">Iron</keyword>
<keyword id="KW-0479">Metal-binding</keyword>
<keyword id="KW-0862">Zinc</keyword>
<comment type="function">
    <text evidence="1">Catalyzes the hydrolytic cleavage of the carbon-nitrogen bond in imidazolone-5-propanoate to yield N-formimidoyl-L-glutamate. It is the third step in the universal histidine degradation pathway.</text>
</comment>
<comment type="catalytic activity">
    <reaction evidence="1">
        <text>4-imidazolone-5-propanoate + H2O = N-formimidoyl-L-glutamate</text>
        <dbReference type="Rhea" id="RHEA:23660"/>
        <dbReference type="ChEBI" id="CHEBI:15377"/>
        <dbReference type="ChEBI" id="CHEBI:58928"/>
        <dbReference type="ChEBI" id="CHEBI:77893"/>
        <dbReference type="EC" id="3.5.2.7"/>
    </reaction>
</comment>
<comment type="cofactor">
    <cofactor evidence="1">
        <name>Zn(2+)</name>
        <dbReference type="ChEBI" id="CHEBI:29105"/>
    </cofactor>
    <cofactor evidence="1">
        <name>Fe(3+)</name>
        <dbReference type="ChEBI" id="CHEBI:29034"/>
    </cofactor>
    <text evidence="1">Binds 1 zinc or iron ion per subunit.</text>
</comment>
<comment type="pathway">
    <text evidence="1">Amino-acid degradation; L-histidine degradation into L-glutamate; N-formimidoyl-L-glutamate from L-histidine: step 3/3.</text>
</comment>
<comment type="subcellular location">
    <subcellularLocation>
        <location evidence="1">Cytoplasm</location>
    </subcellularLocation>
</comment>
<comment type="similarity">
    <text evidence="1">Belongs to the metallo-dependent hydrolases superfamily. HutI family.</text>
</comment>
<comment type="sequence caution" evidence="2">
    <conflict type="erroneous initiation">
        <sequence resource="EMBL-CDS" id="AAL98589"/>
    </conflict>
</comment>
<name>HUTI_STRP8</name>
<feature type="chain" id="PRO_0000160969" description="Imidazolonepropionase">
    <location>
        <begin position="1"/>
        <end position="421"/>
    </location>
</feature>
<feature type="binding site" evidence="1">
    <location>
        <position position="81"/>
    </location>
    <ligand>
        <name>Fe(3+)</name>
        <dbReference type="ChEBI" id="CHEBI:29034"/>
    </ligand>
</feature>
<feature type="binding site" evidence="1">
    <location>
        <position position="81"/>
    </location>
    <ligand>
        <name>Zn(2+)</name>
        <dbReference type="ChEBI" id="CHEBI:29105"/>
    </ligand>
</feature>
<feature type="binding site" evidence="1">
    <location>
        <position position="83"/>
    </location>
    <ligand>
        <name>Fe(3+)</name>
        <dbReference type="ChEBI" id="CHEBI:29034"/>
    </ligand>
</feature>
<feature type="binding site" evidence="1">
    <location>
        <position position="83"/>
    </location>
    <ligand>
        <name>Zn(2+)</name>
        <dbReference type="ChEBI" id="CHEBI:29105"/>
    </ligand>
</feature>
<feature type="binding site" evidence="1">
    <location>
        <position position="90"/>
    </location>
    <ligand>
        <name>4-imidazolone-5-propanoate</name>
        <dbReference type="ChEBI" id="CHEBI:77893"/>
    </ligand>
</feature>
<feature type="binding site" evidence="1">
    <location>
        <position position="153"/>
    </location>
    <ligand>
        <name>4-imidazolone-5-propanoate</name>
        <dbReference type="ChEBI" id="CHEBI:77893"/>
    </ligand>
</feature>
<feature type="binding site" evidence="1">
    <location>
        <position position="153"/>
    </location>
    <ligand>
        <name>N-formimidoyl-L-glutamate</name>
        <dbReference type="ChEBI" id="CHEBI:58928"/>
    </ligand>
</feature>
<feature type="binding site" evidence="1">
    <location>
        <position position="186"/>
    </location>
    <ligand>
        <name>4-imidazolone-5-propanoate</name>
        <dbReference type="ChEBI" id="CHEBI:77893"/>
    </ligand>
</feature>
<feature type="binding site" evidence="1">
    <location>
        <position position="251"/>
    </location>
    <ligand>
        <name>Fe(3+)</name>
        <dbReference type="ChEBI" id="CHEBI:29034"/>
    </ligand>
</feature>
<feature type="binding site" evidence="1">
    <location>
        <position position="251"/>
    </location>
    <ligand>
        <name>Zn(2+)</name>
        <dbReference type="ChEBI" id="CHEBI:29105"/>
    </ligand>
</feature>
<feature type="binding site" evidence="1">
    <location>
        <position position="254"/>
    </location>
    <ligand>
        <name>4-imidazolone-5-propanoate</name>
        <dbReference type="ChEBI" id="CHEBI:77893"/>
    </ligand>
</feature>
<feature type="binding site" evidence="1">
    <location>
        <position position="326"/>
    </location>
    <ligand>
        <name>Fe(3+)</name>
        <dbReference type="ChEBI" id="CHEBI:29034"/>
    </ligand>
</feature>
<feature type="binding site" evidence="1">
    <location>
        <position position="326"/>
    </location>
    <ligand>
        <name>Zn(2+)</name>
        <dbReference type="ChEBI" id="CHEBI:29105"/>
    </ligand>
</feature>
<feature type="binding site" evidence="1">
    <location>
        <position position="328"/>
    </location>
    <ligand>
        <name>N-formimidoyl-L-glutamate</name>
        <dbReference type="ChEBI" id="CHEBI:58928"/>
    </ligand>
</feature>
<feature type="binding site" evidence="1">
    <location>
        <position position="330"/>
    </location>
    <ligand>
        <name>N-formimidoyl-L-glutamate</name>
        <dbReference type="ChEBI" id="CHEBI:58928"/>
    </ligand>
</feature>
<feature type="binding site" evidence="1">
    <location>
        <position position="331"/>
    </location>
    <ligand>
        <name>4-imidazolone-5-propanoate</name>
        <dbReference type="ChEBI" id="CHEBI:77893"/>
    </ligand>
</feature>
<evidence type="ECO:0000255" key="1">
    <source>
        <dbReference type="HAMAP-Rule" id="MF_00372"/>
    </source>
</evidence>
<evidence type="ECO:0000305" key="2"/>
<protein>
    <recommendedName>
        <fullName evidence="1">Imidazolonepropionase</fullName>
        <ecNumber evidence="1">3.5.2.7</ecNumber>
    </recommendedName>
    <alternativeName>
        <fullName evidence="1">Imidazolone-5-propionate hydrolase</fullName>
    </alternativeName>
</protein>
<reference key="1">
    <citation type="journal article" date="2002" name="Proc. Natl. Acad. Sci. U.S.A.">
        <title>Genome sequence and comparative microarray analysis of serotype M18 group A Streptococcus strains associated with acute rheumatic fever outbreaks.</title>
        <authorList>
            <person name="Smoot J.C."/>
            <person name="Barbian K.D."/>
            <person name="Van Gompel J.J."/>
            <person name="Smoot L.M."/>
            <person name="Chaussee M.S."/>
            <person name="Sylva G.L."/>
            <person name="Sturdevant D.E."/>
            <person name="Ricklefs S.M."/>
            <person name="Porcella S.F."/>
            <person name="Parkins L.D."/>
            <person name="Beres S.B."/>
            <person name="Campbell D.S."/>
            <person name="Smith T.M."/>
            <person name="Zhang Q."/>
            <person name="Kapur V."/>
            <person name="Daly J.A."/>
            <person name="Veasy L.G."/>
            <person name="Musser J.M."/>
        </authorList>
    </citation>
    <scope>NUCLEOTIDE SEQUENCE [LARGE SCALE GENOMIC DNA]</scope>
    <source>
        <strain>MGAS8232</strain>
    </source>
</reference>